<proteinExistence type="evidence at protein level"/>
<feature type="chain" id="PRO_0000328296" description="26S proteasome regulatory subunit 7">
    <location>
        <begin position="1"/>
        <end position="428"/>
    </location>
</feature>
<feature type="binding site" evidence="2">
    <location>
        <begin position="211"/>
        <end position="218"/>
    </location>
    <ligand>
        <name>ATP</name>
        <dbReference type="ChEBI" id="CHEBI:30616"/>
    </ligand>
</feature>
<organism>
    <name type="scientific">Dictyostelium discoideum</name>
    <name type="common">Social amoeba</name>
    <dbReference type="NCBI Taxonomy" id="44689"/>
    <lineage>
        <taxon>Eukaryota</taxon>
        <taxon>Amoebozoa</taxon>
        <taxon>Evosea</taxon>
        <taxon>Eumycetozoa</taxon>
        <taxon>Dictyostelia</taxon>
        <taxon>Dictyosteliales</taxon>
        <taxon>Dictyosteliaceae</taxon>
        <taxon>Dictyostelium</taxon>
    </lineage>
</organism>
<reference key="1">
    <citation type="journal article" date="2002" name="Nature">
        <title>Sequence and analysis of chromosome 2 of Dictyostelium discoideum.</title>
        <authorList>
            <person name="Gloeckner G."/>
            <person name="Eichinger L."/>
            <person name="Szafranski K."/>
            <person name="Pachebat J.A."/>
            <person name="Bankier A.T."/>
            <person name="Dear P.H."/>
            <person name="Lehmann R."/>
            <person name="Baumgart C."/>
            <person name="Parra G."/>
            <person name="Abril J.F."/>
            <person name="Guigo R."/>
            <person name="Kumpf K."/>
            <person name="Tunggal B."/>
            <person name="Cox E.C."/>
            <person name="Quail M.A."/>
            <person name="Platzer M."/>
            <person name="Rosenthal A."/>
            <person name="Noegel A.A."/>
        </authorList>
    </citation>
    <scope>NUCLEOTIDE SEQUENCE [LARGE SCALE GENOMIC DNA]</scope>
    <source>
        <strain>AX4</strain>
    </source>
</reference>
<reference key="2">
    <citation type="journal article" date="2005" name="Nature">
        <title>The genome of the social amoeba Dictyostelium discoideum.</title>
        <authorList>
            <person name="Eichinger L."/>
            <person name="Pachebat J.A."/>
            <person name="Gloeckner G."/>
            <person name="Rajandream M.A."/>
            <person name="Sucgang R."/>
            <person name="Berriman M."/>
            <person name="Song J."/>
            <person name="Olsen R."/>
            <person name="Szafranski K."/>
            <person name="Xu Q."/>
            <person name="Tunggal B."/>
            <person name="Kummerfeld S."/>
            <person name="Madera M."/>
            <person name="Konfortov B.A."/>
            <person name="Rivero F."/>
            <person name="Bankier A.T."/>
            <person name="Lehmann R."/>
            <person name="Hamlin N."/>
            <person name="Davies R."/>
            <person name="Gaudet P."/>
            <person name="Fey P."/>
            <person name="Pilcher K."/>
            <person name="Chen G."/>
            <person name="Saunders D."/>
            <person name="Sodergren E.J."/>
            <person name="Davis P."/>
            <person name="Kerhornou A."/>
            <person name="Nie X."/>
            <person name="Hall N."/>
            <person name="Anjard C."/>
            <person name="Hemphill L."/>
            <person name="Bason N."/>
            <person name="Farbrother P."/>
            <person name="Desany B."/>
            <person name="Just E."/>
            <person name="Morio T."/>
            <person name="Rost R."/>
            <person name="Churcher C.M."/>
            <person name="Cooper J."/>
            <person name="Haydock S."/>
            <person name="van Driessche N."/>
            <person name="Cronin A."/>
            <person name="Goodhead I."/>
            <person name="Muzny D.M."/>
            <person name="Mourier T."/>
            <person name="Pain A."/>
            <person name="Lu M."/>
            <person name="Harper D."/>
            <person name="Lindsay R."/>
            <person name="Hauser H."/>
            <person name="James K.D."/>
            <person name="Quiles M."/>
            <person name="Madan Babu M."/>
            <person name="Saito T."/>
            <person name="Buchrieser C."/>
            <person name="Wardroper A."/>
            <person name="Felder M."/>
            <person name="Thangavelu M."/>
            <person name="Johnson D."/>
            <person name="Knights A."/>
            <person name="Loulseged H."/>
            <person name="Mungall K.L."/>
            <person name="Oliver K."/>
            <person name="Price C."/>
            <person name="Quail M.A."/>
            <person name="Urushihara H."/>
            <person name="Hernandez J."/>
            <person name="Rabbinowitsch E."/>
            <person name="Steffen D."/>
            <person name="Sanders M."/>
            <person name="Ma J."/>
            <person name="Kohara Y."/>
            <person name="Sharp S."/>
            <person name="Simmonds M.N."/>
            <person name="Spiegler S."/>
            <person name="Tivey A."/>
            <person name="Sugano S."/>
            <person name="White B."/>
            <person name="Walker D."/>
            <person name="Woodward J.R."/>
            <person name="Winckler T."/>
            <person name="Tanaka Y."/>
            <person name="Shaulsky G."/>
            <person name="Schleicher M."/>
            <person name="Weinstock G.M."/>
            <person name="Rosenthal A."/>
            <person name="Cox E.C."/>
            <person name="Chisholm R.L."/>
            <person name="Gibbs R.A."/>
            <person name="Loomis W.F."/>
            <person name="Platzer M."/>
            <person name="Kay R.R."/>
            <person name="Williams J.G."/>
            <person name="Dear P.H."/>
            <person name="Noegel A.A."/>
            <person name="Barrell B.G."/>
            <person name="Kuspa A."/>
        </authorList>
    </citation>
    <scope>NUCLEOTIDE SEQUENCE [LARGE SCALE GENOMIC DNA]</scope>
    <source>
        <strain>AX4</strain>
    </source>
</reference>
<reference key="3">
    <citation type="journal article" date="2006" name="Mol. Cell. Proteomics">
        <title>Proteomics fingerprinting of phagosome maturation and evidence for the role of a Galpha during uptake.</title>
        <authorList>
            <person name="Gotthardt D."/>
            <person name="Blancheteau V."/>
            <person name="Bosserhoff A."/>
            <person name="Ruppert T."/>
            <person name="Delorenzi M."/>
            <person name="Soldati T."/>
        </authorList>
    </citation>
    <scope>IDENTIFICATION BY MASS SPECTROMETRY [LARGE SCALE ANALYSIS]</scope>
    <source>
        <strain>AX2</strain>
    </source>
</reference>
<protein>
    <recommendedName>
        <fullName>26S proteasome regulatory subunit 7</fullName>
    </recommendedName>
    <alternativeName>
        <fullName>26S proteasome AAA-ATPase subunit RPT1</fullName>
    </alternativeName>
    <alternativeName>
        <fullName>Proteasome 26S subunit ATPase 2</fullName>
    </alternativeName>
</protein>
<gene>
    <name type="primary">psmC2</name>
    <name type="ORF">DDB_G0276917</name>
</gene>
<name>PRS7_DICDI</name>
<sequence>MVNKEDVEDELLNETAPVALDEGDIALLKSYGVGPYSKSIRILEEDIKKMTSKVNELCGIKESDTGIGPPSQWDLVVDKTSAHEEPPLQVARCTKIIDVGKPNAKYIITVKQIAKFVVALGDKLSPTDVEEGIRVGVDRNKYQIQIPLPPKIDASVTMMQVEEKPDITYKDVGGCKEQIEKLREVVEMPLLHPEKFVNLGIDPPKGVLMYGPPGTGKTLCARAVANRTDAAFVRVIGSELVQKYVGEGARMVRDLFQMARSKKACIIFFDEVDAIGGARFDDGAGGDNEVQRTMLELINQLDGFDPRGNIKVLMATNRPDTLDPALLRPGRLDRKVEFGLPDLEGRAHIFTIHAKTMSCARDIRFELLARLCPNSTGADIRSVCTEAGMFAIRARRKVVSEKDFLEAIDKVIKSYAKFSATSRYMHYN</sequence>
<dbReference type="EMBL" id="AAFI02000019">
    <property type="protein sequence ID" value="EAL68960.1"/>
    <property type="molecule type" value="Genomic_DNA"/>
</dbReference>
<dbReference type="RefSeq" id="XP_642830.1">
    <property type="nucleotide sequence ID" value="XM_637738.1"/>
</dbReference>
<dbReference type="SMR" id="Q86JA1"/>
<dbReference type="FunCoup" id="Q86JA1">
    <property type="interactions" value="838"/>
</dbReference>
<dbReference type="STRING" id="44689.Q86JA1"/>
<dbReference type="PaxDb" id="44689-DDB0232966"/>
<dbReference type="EnsemblProtists" id="EAL68960">
    <property type="protein sequence ID" value="EAL68960"/>
    <property type="gene ID" value="DDB_G0276917"/>
</dbReference>
<dbReference type="GeneID" id="8620693"/>
<dbReference type="KEGG" id="ddi:DDB_G0276917"/>
<dbReference type="dictyBase" id="DDB_G0276917">
    <property type="gene designation" value="psmC2"/>
</dbReference>
<dbReference type="VEuPathDB" id="AmoebaDB:DDB_G0276917"/>
<dbReference type="eggNOG" id="KOG0729">
    <property type="taxonomic scope" value="Eukaryota"/>
</dbReference>
<dbReference type="HOGENOM" id="CLU_000688_6_1_1"/>
<dbReference type="InParanoid" id="Q86JA1"/>
<dbReference type="OMA" id="RSKYHIE"/>
<dbReference type="PhylomeDB" id="Q86JA1"/>
<dbReference type="Reactome" id="R-DDI-1236978">
    <property type="pathway name" value="Cross-presentation of soluble exogenous antigens (endosomes)"/>
</dbReference>
<dbReference type="Reactome" id="R-DDI-174084">
    <property type="pathway name" value="Autodegradation of Cdh1 by Cdh1:APC/C"/>
</dbReference>
<dbReference type="Reactome" id="R-DDI-174154">
    <property type="pathway name" value="APC/C:Cdc20 mediated degradation of Securin"/>
</dbReference>
<dbReference type="Reactome" id="R-DDI-174178">
    <property type="pathway name" value="APC/C:Cdh1 mediated degradation of Cdc20 and other APC/C:Cdh1 targeted proteins in late mitosis/early G1"/>
</dbReference>
<dbReference type="Reactome" id="R-DDI-2467813">
    <property type="pathway name" value="Separation of Sister Chromatids"/>
</dbReference>
<dbReference type="Reactome" id="R-DDI-349425">
    <property type="pathway name" value="Autodegradation of the E3 ubiquitin ligase COP1"/>
</dbReference>
<dbReference type="Reactome" id="R-DDI-382556">
    <property type="pathway name" value="ABC-family proteins mediated transport"/>
</dbReference>
<dbReference type="Reactome" id="R-DDI-450408">
    <property type="pathway name" value="AUF1 (hnRNP D0) binds and destabilizes mRNA"/>
</dbReference>
<dbReference type="Reactome" id="R-DDI-4641258">
    <property type="pathway name" value="Degradation of DVL"/>
</dbReference>
<dbReference type="Reactome" id="R-DDI-5632684">
    <property type="pathway name" value="Hedgehog 'on' state"/>
</dbReference>
<dbReference type="Reactome" id="R-DDI-5658442">
    <property type="pathway name" value="Regulation of RAS by GAPs"/>
</dbReference>
<dbReference type="Reactome" id="R-DDI-5687128">
    <property type="pathway name" value="MAPK6/MAPK4 signaling"/>
</dbReference>
<dbReference type="Reactome" id="R-DDI-5689603">
    <property type="pathway name" value="UCH proteinases"/>
</dbReference>
<dbReference type="Reactome" id="R-DDI-5689880">
    <property type="pathway name" value="Ub-specific processing proteases"/>
</dbReference>
<dbReference type="Reactome" id="R-DDI-6798695">
    <property type="pathway name" value="Neutrophil degranulation"/>
</dbReference>
<dbReference type="Reactome" id="R-DDI-68949">
    <property type="pathway name" value="Orc1 removal from chromatin"/>
</dbReference>
<dbReference type="Reactome" id="R-DDI-69017">
    <property type="pathway name" value="CDK-mediated phosphorylation and removal of Cdc6"/>
</dbReference>
<dbReference type="Reactome" id="R-DDI-69601">
    <property type="pathway name" value="Ubiquitin Mediated Degradation of Phosphorylated Cdc25A"/>
</dbReference>
<dbReference type="Reactome" id="R-DDI-8854050">
    <property type="pathway name" value="FBXL7 down-regulates AURKA during mitotic entry and in early mitosis"/>
</dbReference>
<dbReference type="Reactome" id="R-DDI-8948751">
    <property type="pathway name" value="Regulation of PTEN stability and activity"/>
</dbReference>
<dbReference type="Reactome" id="R-DDI-8951664">
    <property type="pathway name" value="Neddylation"/>
</dbReference>
<dbReference type="Reactome" id="R-DDI-9755511">
    <property type="pathway name" value="KEAP1-NFE2L2 pathway"/>
</dbReference>
<dbReference type="Reactome" id="R-DDI-983168">
    <property type="pathway name" value="Antigen processing: Ubiquitination &amp; Proteasome degradation"/>
</dbReference>
<dbReference type="Reactome" id="R-DDI-9907900">
    <property type="pathway name" value="Proteasome assembly"/>
</dbReference>
<dbReference type="PRO" id="PR:Q86JA1"/>
<dbReference type="Proteomes" id="UP000002195">
    <property type="component" value="Chromosome 2"/>
</dbReference>
<dbReference type="GO" id="GO:0005634">
    <property type="term" value="C:nucleus"/>
    <property type="evidence" value="ECO:0007669"/>
    <property type="project" value="UniProtKB-SubCell"/>
</dbReference>
<dbReference type="GO" id="GO:0045335">
    <property type="term" value="C:phagocytic vesicle"/>
    <property type="evidence" value="ECO:0007005"/>
    <property type="project" value="dictyBase"/>
</dbReference>
<dbReference type="GO" id="GO:0000502">
    <property type="term" value="C:proteasome complex"/>
    <property type="evidence" value="ECO:0000250"/>
    <property type="project" value="UniProtKB"/>
</dbReference>
<dbReference type="GO" id="GO:0008540">
    <property type="term" value="C:proteasome regulatory particle, base subcomplex"/>
    <property type="evidence" value="ECO:0000318"/>
    <property type="project" value="GO_Central"/>
</dbReference>
<dbReference type="GO" id="GO:0005524">
    <property type="term" value="F:ATP binding"/>
    <property type="evidence" value="ECO:0007669"/>
    <property type="project" value="UniProtKB-KW"/>
</dbReference>
<dbReference type="GO" id="GO:0016887">
    <property type="term" value="F:ATP hydrolysis activity"/>
    <property type="evidence" value="ECO:0007669"/>
    <property type="project" value="InterPro"/>
</dbReference>
<dbReference type="GO" id="GO:0036402">
    <property type="term" value="F:proteasome-activating activity"/>
    <property type="evidence" value="ECO:0000250"/>
    <property type="project" value="UniProtKB"/>
</dbReference>
<dbReference type="GO" id="GO:0043161">
    <property type="term" value="P:proteasome-mediated ubiquitin-dependent protein catabolic process"/>
    <property type="evidence" value="ECO:0000318"/>
    <property type="project" value="GO_Central"/>
</dbReference>
<dbReference type="GO" id="GO:0006511">
    <property type="term" value="P:ubiquitin-dependent protein catabolic process"/>
    <property type="evidence" value="ECO:0000250"/>
    <property type="project" value="UniProtKB"/>
</dbReference>
<dbReference type="CDD" id="cd19502">
    <property type="entry name" value="RecA-like_PAN_like"/>
    <property type="match status" value="1"/>
</dbReference>
<dbReference type="FunFam" id="1.10.8.60:FF:000005">
    <property type="entry name" value="26S protease regulatory subunit 7"/>
    <property type="match status" value="1"/>
</dbReference>
<dbReference type="FunFam" id="2.40.50.140:FF:000075">
    <property type="entry name" value="26S protease regulatory subunit 7"/>
    <property type="match status" value="1"/>
</dbReference>
<dbReference type="FunFam" id="3.40.50.300:FF:000027">
    <property type="entry name" value="26S protease regulatory subunit 7"/>
    <property type="match status" value="1"/>
</dbReference>
<dbReference type="Gene3D" id="1.10.8.60">
    <property type="match status" value="1"/>
</dbReference>
<dbReference type="Gene3D" id="2.40.50.140">
    <property type="entry name" value="Nucleic acid-binding proteins"/>
    <property type="match status" value="1"/>
</dbReference>
<dbReference type="Gene3D" id="3.40.50.300">
    <property type="entry name" value="P-loop containing nucleotide triphosphate hydrolases"/>
    <property type="match status" value="1"/>
</dbReference>
<dbReference type="InterPro" id="IPR050221">
    <property type="entry name" value="26S_Proteasome_ATPase"/>
</dbReference>
<dbReference type="InterPro" id="IPR003593">
    <property type="entry name" value="AAA+_ATPase"/>
</dbReference>
<dbReference type="InterPro" id="IPR041569">
    <property type="entry name" value="AAA_lid_3"/>
</dbReference>
<dbReference type="InterPro" id="IPR003959">
    <property type="entry name" value="ATPase_AAA_core"/>
</dbReference>
<dbReference type="InterPro" id="IPR003960">
    <property type="entry name" value="ATPase_AAA_CS"/>
</dbReference>
<dbReference type="InterPro" id="IPR012340">
    <property type="entry name" value="NA-bd_OB-fold"/>
</dbReference>
<dbReference type="InterPro" id="IPR027417">
    <property type="entry name" value="P-loop_NTPase"/>
</dbReference>
<dbReference type="InterPro" id="IPR048723">
    <property type="entry name" value="PRS7-like_OB"/>
</dbReference>
<dbReference type="PANTHER" id="PTHR23073">
    <property type="entry name" value="26S PROTEASOME REGULATORY SUBUNIT"/>
    <property type="match status" value="1"/>
</dbReference>
<dbReference type="Pfam" id="PF00004">
    <property type="entry name" value="AAA"/>
    <property type="match status" value="1"/>
</dbReference>
<dbReference type="Pfam" id="PF17862">
    <property type="entry name" value="AAA_lid_3"/>
    <property type="match status" value="1"/>
</dbReference>
<dbReference type="Pfam" id="PF21236">
    <property type="entry name" value="PRS7_OB"/>
    <property type="match status" value="1"/>
</dbReference>
<dbReference type="SMART" id="SM00382">
    <property type="entry name" value="AAA"/>
    <property type="match status" value="1"/>
</dbReference>
<dbReference type="SUPFAM" id="SSF52540">
    <property type="entry name" value="P-loop containing nucleoside triphosphate hydrolases"/>
    <property type="match status" value="1"/>
</dbReference>
<dbReference type="PROSITE" id="PS00674">
    <property type="entry name" value="AAA"/>
    <property type="match status" value="1"/>
</dbReference>
<keyword id="KW-0067">ATP-binding</keyword>
<keyword id="KW-0963">Cytoplasm</keyword>
<keyword id="KW-0547">Nucleotide-binding</keyword>
<keyword id="KW-0539">Nucleus</keyword>
<keyword id="KW-0647">Proteasome</keyword>
<keyword id="KW-1185">Reference proteome</keyword>
<comment type="function">
    <text evidence="1">The 26S proteasome is involved in the ATP-dependent degradation of ubiquitinated proteins. The regulatory (or ATPase) complex confers ATP dependency and substrate specificity to the 26S complex (By similarity).</text>
</comment>
<comment type="subcellular location">
    <subcellularLocation>
        <location evidence="1">Cytoplasm</location>
    </subcellularLocation>
    <subcellularLocation>
        <location evidence="1">Nucleus</location>
    </subcellularLocation>
</comment>
<comment type="similarity">
    <text evidence="3">Belongs to the AAA ATPase family.</text>
</comment>
<evidence type="ECO:0000250" key="1">
    <source>
        <dbReference type="UniProtKB" id="P35998"/>
    </source>
</evidence>
<evidence type="ECO:0000255" key="2"/>
<evidence type="ECO:0000305" key="3"/>
<accession>Q86JA1</accession>
<accession>Q550V2</accession>